<name>GBB2_DROME</name>
<sequence>MPKIDPETQKLYDEINGMIQKFKDDQKSKADCTLADKCGDMGDVPKIRFSSKKILKGHINKVNSVHFAGDSRHCVTGSLDGKLIIWDTWTANKVQIIPLRSAWVMTVAFSPSGNFVACGGMDNQCTVYDVNNRDASGVAKMVKELMGYEGFLSSCRFLDDGHLITGSGDMKICHWDLEKGVKTMDFNGHAGDIAGLSLSPDMKTYITGSVDKTAKLWDVREEGHKQMFFGHDMDVSSVCYHPSGFGFASCSEDQTARMYDLRADQQIAQYEPPQKNTGFTSCALSTSGRYLMCGGIEGNVHSWDTMKQRHTGTLSGHENRITCISLCPNGMCLASTSWDQQVRLWL</sequence>
<protein>
    <recommendedName>
        <fullName>Guanine nucleotide-binding protein subunit beta-2</fullName>
    </recommendedName>
</protein>
<evidence type="ECO:0000250" key="1">
    <source>
        <dbReference type="UniProtKB" id="Q9NFZ1"/>
    </source>
</evidence>
<evidence type="ECO:0000255" key="2"/>
<evidence type="ECO:0000269" key="3">
    <source>
    </source>
</evidence>
<evidence type="ECO:0000269" key="4">
    <source>
    </source>
</evidence>
<evidence type="ECO:0000305" key="5"/>
<evidence type="ECO:0000312" key="6">
    <source>
        <dbReference type="FlyBase" id="FBgn0004623"/>
    </source>
</evidence>
<comment type="function">
    <text>Guanine nucleotide-binding proteins (G proteins) are involved as a modulator or transducer in various transmembrane signaling systems. The beta and gamma chains are required for the GTPase activity, for replacement of GDP by GTP, and for G protein-effector interaction.</text>
</comment>
<comment type="subunit">
    <text evidence="1">G proteins are composed of 3 units, alpha, beta and gamma. Interacts with Ggamma30A/Guanine nucleotide-binding protein subunit gamma-e (By similarity).</text>
</comment>
<comment type="interaction">
    <interactant intactId="EBI-128499">
        <id>P29829</id>
    </interactant>
    <interactant intactId="EBI-2695634">
        <id>Q9NFZ3</id>
        <label>Ggamma30A</label>
    </interactant>
    <organismsDiffer>false</organismsDiffer>
    <experiments>2</experiments>
</comment>
<comment type="subcellular location">
    <subcellularLocation>
        <location evidence="3">Cytoplasm</location>
    </subcellularLocation>
    <subcellularLocation>
        <location evidence="3">Cell projection</location>
        <location evidence="3">Axon</location>
    </subcellularLocation>
    <subcellularLocation>
        <location evidence="3">Cell projection</location>
        <location evidence="3">Rhabdomere</location>
    </subcellularLocation>
</comment>
<comment type="tissue specificity">
    <text evidence="3 4">Expressed exclusively in photoreceptor cells in the compound eye (at protein level).</text>
</comment>
<comment type="developmental stage">
    <text evidence="4">Expressed in adult heads but not in adult bodies (PubMed:1910788). Not expressed in embryos, larvae or pupae (PubMed:1910788).</text>
</comment>
<comment type="similarity">
    <text evidence="5">Belongs to the WD repeat G protein beta family.</text>
</comment>
<gene>
    <name type="primary">Gbeta76C</name>
    <name type="synonym">Gb76C</name>
    <name evidence="6" type="synonym">Gbe</name>
    <name evidence="6" type="synonym">Gbetae</name>
    <name evidence="6" type="ORF">CG8770</name>
</gene>
<dbReference type="EMBL" id="M76593">
    <property type="protein sequence ID" value="AAA73103.1"/>
    <property type="molecule type" value="mRNA"/>
</dbReference>
<dbReference type="EMBL" id="AE014296">
    <property type="protein sequence ID" value="AAF49124.1"/>
    <property type="molecule type" value="Genomic_DNA"/>
</dbReference>
<dbReference type="EMBL" id="AY118886">
    <property type="protein sequence ID" value="AAM50746.1"/>
    <property type="molecule type" value="mRNA"/>
</dbReference>
<dbReference type="PIR" id="JU0269">
    <property type="entry name" value="RGFFB"/>
</dbReference>
<dbReference type="RefSeq" id="NP_523720.2">
    <property type="nucleotide sequence ID" value="NM_078996.3"/>
</dbReference>
<dbReference type="SMR" id="P29829"/>
<dbReference type="BioGRID" id="65418">
    <property type="interactions" value="7"/>
</dbReference>
<dbReference type="FunCoup" id="P29829">
    <property type="interactions" value="57"/>
</dbReference>
<dbReference type="IntAct" id="P29829">
    <property type="interactions" value="5"/>
</dbReference>
<dbReference type="STRING" id="7227.FBpp0074717"/>
<dbReference type="PaxDb" id="7227-FBpp0074717"/>
<dbReference type="DNASU" id="40148"/>
<dbReference type="EnsemblMetazoa" id="FBtr0074949">
    <property type="protein sequence ID" value="FBpp0074717"/>
    <property type="gene ID" value="FBgn0004623"/>
</dbReference>
<dbReference type="GeneID" id="40148"/>
<dbReference type="KEGG" id="dme:Dmel_CG8770"/>
<dbReference type="AGR" id="FB:FBgn0004623"/>
<dbReference type="CTD" id="40148"/>
<dbReference type="FlyBase" id="FBgn0004623">
    <property type="gene designation" value="Gbeta76C"/>
</dbReference>
<dbReference type="VEuPathDB" id="VectorBase:FBgn0004623"/>
<dbReference type="eggNOG" id="KOG0286">
    <property type="taxonomic scope" value="Eukaryota"/>
</dbReference>
<dbReference type="GeneTree" id="ENSGT01000000214413"/>
<dbReference type="HOGENOM" id="CLU_000288_57_34_1"/>
<dbReference type="InParanoid" id="P29829"/>
<dbReference type="OMA" id="CYHPSGQ"/>
<dbReference type="OrthoDB" id="10255630at2759"/>
<dbReference type="PhylomeDB" id="P29829"/>
<dbReference type="Reactome" id="R-DME-1296041">
    <property type="pathway name" value="Activation of G protein gated Potassium channels"/>
</dbReference>
<dbReference type="Reactome" id="R-DME-202040">
    <property type="pathway name" value="G-protein activation"/>
</dbReference>
<dbReference type="Reactome" id="R-DME-392170">
    <property type="pathway name" value="ADP signalling through P2Y purinoceptor 12"/>
</dbReference>
<dbReference type="Reactome" id="R-DME-392451">
    <property type="pathway name" value="G beta:gamma signalling through PI3Kgamma"/>
</dbReference>
<dbReference type="Reactome" id="R-DME-392851">
    <property type="pathway name" value="Prostacyclin signalling through prostacyclin receptor"/>
</dbReference>
<dbReference type="Reactome" id="R-DME-400042">
    <property type="pathway name" value="Adrenaline,noradrenaline inhibits insulin secretion"/>
</dbReference>
<dbReference type="Reactome" id="R-DME-4086398">
    <property type="pathway name" value="Ca2+ pathway"/>
</dbReference>
<dbReference type="Reactome" id="R-DME-416476">
    <property type="pathway name" value="G alpha (q) signalling events"/>
</dbReference>
<dbReference type="Reactome" id="R-DME-416482">
    <property type="pathway name" value="G alpha (12/13) signalling events"/>
</dbReference>
<dbReference type="Reactome" id="R-DME-418217">
    <property type="pathway name" value="G beta:gamma signalling through PLC beta"/>
</dbReference>
<dbReference type="Reactome" id="R-DME-418555">
    <property type="pathway name" value="G alpha (s) signalling events"/>
</dbReference>
<dbReference type="Reactome" id="R-DME-418594">
    <property type="pathway name" value="G alpha (i) signalling events"/>
</dbReference>
<dbReference type="Reactome" id="R-DME-418597">
    <property type="pathway name" value="G alpha (z) signalling events"/>
</dbReference>
<dbReference type="Reactome" id="R-DME-428930">
    <property type="pathway name" value="Thromboxane signalling through TP receptor"/>
</dbReference>
<dbReference type="Reactome" id="R-DME-500657">
    <property type="pathway name" value="Presynaptic function of Kainate receptors"/>
</dbReference>
<dbReference type="Reactome" id="R-DME-6814122">
    <property type="pathway name" value="Cooperation of PDCL (PhLP1) and TRiC/CCT in G-protein beta folding"/>
</dbReference>
<dbReference type="Reactome" id="R-DME-8964315">
    <property type="pathway name" value="G beta:gamma signalling through BTK"/>
</dbReference>
<dbReference type="Reactome" id="R-DME-8964616">
    <property type="pathway name" value="G beta:gamma signalling through CDC42"/>
</dbReference>
<dbReference type="Reactome" id="R-DME-9009391">
    <property type="pathway name" value="Extra-nuclear estrogen signaling"/>
</dbReference>
<dbReference type="Reactome" id="R-DME-997272">
    <property type="pathway name" value="Inhibition of voltage gated Ca2+ channels via Gbeta/gamma subunits"/>
</dbReference>
<dbReference type="BioGRID-ORCS" id="40148">
    <property type="hits" value="0 hits in 1 CRISPR screen"/>
</dbReference>
<dbReference type="ChiTaRS" id="Gbeta76C">
    <property type="organism name" value="fly"/>
</dbReference>
<dbReference type="GenomeRNAi" id="40148"/>
<dbReference type="PRO" id="PR:P29829"/>
<dbReference type="Proteomes" id="UP000000803">
    <property type="component" value="Chromosome 3L"/>
</dbReference>
<dbReference type="Bgee" id="FBgn0004623">
    <property type="expression patterns" value="Expressed in outer photoreceptor cell (Drosophila) in insect head and 48 other cell types or tissues"/>
</dbReference>
<dbReference type="GO" id="GO:0030424">
    <property type="term" value="C:axon"/>
    <property type="evidence" value="ECO:0007669"/>
    <property type="project" value="UniProtKB-SubCell"/>
</dbReference>
<dbReference type="GO" id="GO:0005737">
    <property type="term" value="C:cytoplasm"/>
    <property type="evidence" value="ECO:0000314"/>
    <property type="project" value="FlyBase"/>
</dbReference>
<dbReference type="GO" id="GO:0005834">
    <property type="term" value="C:heterotrimeric G-protein complex"/>
    <property type="evidence" value="ECO:0000314"/>
    <property type="project" value="FlyBase"/>
</dbReference>
<dbReference type="GO" id="GO:0016028">
    <property type="term" value="C:rhabdomere"/>
    <property type="evidence" value="ECO:0000314"/>
    <property type="project" value="FlyBase"/>
</dbReference>
<dbReference type="GO" id="GO:0016004">
    <property type="term" value="F:phospholipase activator activity"/>
    <property type="evidence" value="ECO:0000315"/>
    <property type="project" value="FlyBase"/>
</dbReference>
<dbReference type="GO" id="GO:0046982">
    <property type="term" value="F:protein heterodimerization activity"/>
    <property type="evidence" value="ECO:0000353"/>
    <property type="project" value="FlyBase"/>
</dbReference>
<dbReference type="GO" id="GO:0030159">
    <property type="term" value="F:signaling receptor complex adaptor activity"/>
    <property type="evidence" value="ECO:0000318"/>
    <property type="project" value="GO_Central"/>
</dbReference>
<dbReference type="GO" id="GO:0007186">
    <property type="term" value="P:G protein-coupled receptor signaling pathway"/>
    <property type="evidence" value="ECO:0000314"/>
    <property type="project" value="FlyBase"/>
</dbReference>
<dbReference type="GO" id="GO:0016059">
    <property type="term" value="P:negative regulation of opsin-mediated signaling pathway"/>
    <property type="evidence" value="ECO:0000304"/>
    <property type="project" value="FlyBase"/>
</dbReference>
<dbReference type="GO" id="GO:0045879">
    <property type="term" value="P:negative regulation of smoothened signaling pathway"/>
    <property type="evidence" value="ECO:0000316"/>
    <property type="project" value="FlyBase"/>
</dbReference>
<dbReference type="GO" id="GO:0030265">
    <property type="term" value="P:phospholipase C-activating opsin-mediated signaling pathway"/>
    <property type="evidence" value="ECO:0000314"/>
    <property type="project" value="FlyBase"/>
</dbReference>
<dbReference type="GO" id="GO:0007602">
    <property type="term" value="P:phototransduction"/>
    <property type="evidence" value="ECO:0000315"/>
    <property type="project" value="FlyBase"/>
</dbReference>
<dbReference type="GO" id="GO:0007601">
    <property type="term" value="P:visual perception"/>
    <property type="evidence" value="ECO:0007669"/>
    <property type="project" value="UniProtKB-KW"/>
</dbReference>
<dbReference type="CDD" id="cd00200">
    <property type="entry name" value="WD40"/>
    <property type="match status" value="1"/>
</dbReference>
<dbReference type="FunFam" id="2.130.10.10:FF:000858">
    <property type="entry name" value="GH16945"/>
    <property type="match status" value="1"/>
</dbReference>
<dbReference type="Gene3D" id="2.130.10.10">
    <property type="entry name" value="YVTN repeat-like/Quinoprotein amine dehydrogenase"/>
    <property type="match status" value="1"/>
</dbReference>
<dbReference type="InterPro" id="IPR020472">
    <property type="entry name" value="G-protein_beta_WD-40_rep"/>
</dbReference>
<dbReference type="InterPro" id="IPR001632">
    <property type="entry name" value="Gprotein_B"/>
</dbReference>
<dbReference type="InterPro" id="IPR016346">
    <property type="entry name" value="Guanine_nucleotide-bd_bsu"/>
</dbReference>
<dbReference type="InterPro" id="IPR015943">
    <property type="entry name" value="WD40/YVTN_repeat-like_dom_sf"/>
</dbReference>
<dbReference type="InterPro" id="IPR036322">
    <property type="entry name" value="WD40_repeat_dom_sf"/>
</dbReference>
<dbReference type="InterPro" id="IPR001680">
    <property type="entry name" value="WD40_rpt"/>
</dbReference>
<dbReference type="PANTHER" id="PTHR19850">
    <property type="entry name" value="GUANINE NUCLEOTIDE-BINDING PROTEIN BETA G PROTEIN BETA"/>
    <property type="match status" value="1"/>
</dbReference>
<dbReference type="Pfam" id="PF25391">
    <property type="entry name" value="WD40_Gbeta"/>
    <property type="match status" value="1"/>
</dbReference>
<dbReference type="PIRSF" id="PIRSF002394">
    <property type="entry name" value="GN-bd_beta"/>
    <property type="match status" value="1"/>
</dbReference>
<dbReference type="PRINTS" id="PR00319">
    <property type="entry name" value="GPROTEINB"/>
</dbReference>
<dbReference type="PRINTS" id="PR00320">
    <property type="entry name" value="GPROTEINBRPT"/>
</dbReference>
<dbReference type="SMART" id="SM00320">
    <property type="entry name" value="WD40"/>
    <property type="match status" value="7"/>
</dbReference>
<dbReference type="SUPFAM" id="SSF50978">
    <property type="entry name" value="WD40 repeat-like"/>
    <property type="match status" value="1"/>
</dbReference>
<dbReference type="PROSITE" id="PS00678">
    <property type="entry name" value="WD_REPEATS_1"/>
    <property type="match status" value="1"/>
</dbReference>
<dbReference type="PROSITE" id="PS50082">
    <property type="entry name" value="WD_REPEATS_2"/>
    <property type="match status" value="4"/>
</dbReference>
<dbReference type="PROSITE" id="PS50294">
    <property type="entry name" value="WD_REPEATS_REGION"/>
    <property type="match status" value="3"/>
</dbReference>
<organism>
    <name type="scientific">Drosophila melanogaster</name>
    <name type="common">Fruit fly</name>
    <dbReference type="NCBI Taxonomy" id="7227"/>
    <lineage>
        <taxon>Eukaryota</taxon>
        <taxon>Metazoa</taxon>
        <taxon>Ecdysozoa</taxon>
        <taxon>Arthropoda</taxon>
        <taxon>Hexapoda</taxon>
        <taxon>Insecta</taxon>
        <taxon>Pterygota</taxon>
        <taxon>Neoptera</taxon>
        <taxon>Endopterygota</taxon>
        <taxon>Diptera</taxon>
        <taxon>Brachycera</taxon>
        <taxon>Muscomorpha</taxon>
        <taxon>Ephydroidea</taxon>
        <taxon>Drosophilidae</taxon>
        <taxon>Drosophila</taxon>
        <taxon>Sophophora</taxon>
    </lineage>
</organism>
<proteinExistence type="evidence at protein level"/>
<feature type="chain" id="PRO_0000127716" description="Guanine nucleotide-binding protein subunit beta-2">
    <location>
        <begin position="1"/>
        <end position="346"/>
    </location>
</feature>
<feature type="repeat" description="WD 1" evidence="2">
    <location>
        <begin position="57"/>
        <end position="96"/>
    </location>
</feature>
<feature type="repeat" description="WD 2" evidence="2">
    <location>
        <begin position="99"/>
        <end position="138"/>
    </location>
</feature>
<feature type="repeat" description="WD 3" evidence="2">
    <location>
        <begin position="147"/>
        <end position="185"/>
    </location>
</feature>
<feature type="repeat" description="WD 4" evidence="2">
    <location>
        <begin position="188"/>
        <end position="227"/>
    </location>
</feature>
<feature type="repeat" description="WD 5" evidence="2">
    <location>
        <begin position="230"/>
        <end position="269"/>
    </location>
</feature>
<feature type="repeat" description="WD 6" evidence="2">
    <location>
        <begin position="274"/>
        <end position="313"/>
    </location>
</feature>
<feature type="repeat" description="WD 7" evidence="2">
    <location>
        <begin position="316"/>
        <end position="346"/>
    </location>
</feature>
<feature type="sequence conflict" description="In Ref. 1; AAA73103." evidence="5" ref="1">
    <original>V</original>
    <variation>E</variation>
    <location>
        <position position="116"/>
    </location>
</feature>
<feature type="sequence conflict" description="In Ref. 1; AAA73103." evidence="5" ref="1">
    <original>S</original>
    <variation>P</variation>
    <location>
        <position position="136"/>
    </location>
</feature>
<reference key="1">
    <citation type="journal article" date="1991" name="Neuron">
        <title>A G beta protein in the Drosophila compound eye is different from that in the brain.</title>
        <authorList>
            <person name="Yarfitz S."/>
            <person name="Niemi G.A."/>
            <person name="McConnell J.L."/>
            <person name="Fitch C.L."/>
            <person name="Hurley J.B."/>
        </authorList>
    </citation>
    <scope>NUCLEOTIDE SEQUENCE [MRNA]</scope>
    <scope>TISSUE SPECIFICITY</scope>
    <scope>DEVELOPMENTAL STAGE</scope>
    <source>
        <tissue>Eye</tissue>
    </source>
</reference>
<reference key="2">
    <citation type="journal article" date="2000" name="Science">
        <title>The genome sequence of Drosophila melanogaster.</title>
        <authorList>
            <person name="Adams M.D."/>
            <person name="Celniker S.E."/>
            <person name="Holt R.A."/>
            <person name="Evans C.A."/>
            <person name="Gocayne J.D."/>
            <person name="Amanatides P.G."/>
            <person name="Scherer S.E."/>
            <person name="Li P.W."/>
            <person name="Hoskins R.A."/>
            <person name="Galle R.F."/>
            <person name="George R.A."/>
            <person name="Lewis S.E."/>
            <person name="Richards S."/>
            <person name="Ashburner M."/>
            <person name="Henderson S.N."/>
            <person name="Sutton G.G."/>
            <person name="Wortman J.R."/>
            <person name="Yandell M.D."/>
            <person name="Zhang Q."/>
            <person name="Chen L.X."/>
            <person name="Brandon R.C."/>
            <person name="Rogers Y.-H.C."/>
            <person name="Blazej R.G."/>
            <person name="Champe M."/>
            <person name="Pfeiffer B.D."/>
            <person name="Wan K.H."/>
            <person name="Doyle C."/>
            <person name="Baxter E.G."/>
            <person name="Helt G."/>
            <person name="Nelson C.R."/>
            <person name="Miklos G.L.G."/>
            <person name="Abril J.F."/>
            <person name="Agbayani A."/>
            <person name="An H.-J."/>
            <person name="Andrews-Pfannkoch C."/>
            <person name="Baldwin D."/>
            <person name="Ballew R.M."/>
            <person name="Basu A."/>
            <person name="Baxendale J."/>
            <person name="Bayraktaroglu L."/>
            <person name="Beasley E.M."/>
            <person name="Beeson K.Y."/>
            <person name="Benos P.V."/>
            <person name="Berman B.P."/>
            <person name="Bhandari D."/>
            <person name="Bolshakov S."/>
            <person name="Borkova D."/>
            <person name="Botchan M.R."/>
            <person name="Bouck J."/>
            <person name="Brokstein P."/>
            <person name="Brottier P."/>
            <person name="Burtis K.C."/>
            <person name="Busam D.A."/>
            <person name="Butler H."/>
            <person name="Cadieu E."/>
            <person name="Center A."/>
            <person name="Chandra I."/>
            <person name="Cherry J.M."/>
            <person name="Cawley S."/>
            <person name="Dahlke C."/>
            <person name="Davenport L.B."/>
            <person name="Davies P."/>
            <person name="de Pablos B."/>
            <person name="Delcher A."/>
            <person name="Deng Z."/>
            <person name="Mays A.D."/>
            <person name="Dew I."/>
            <person name="Dietz S.M."/>
            <person name="Dodson K."/>
            <person name="Doup L.E."/>
            <person name="Downes M."/>
            <person name="Dugan-Rocha S."/>
            <person name="Dunkov B.C."/>
            <person name="Dunn P."/>
            <person name="Durbin K.J."/>
            <person name="Evangelista C.C."/>
            <person name="Ferraz C."/>
            <person name="Ferriera S."/>
            <person name="Fleischmann W."/>
            <person name="Fosler C."/>
            <person name="Gabrielian A.E."/>
            <person name="Garg N.S."/>
            <person name="Gelbart W.M."/>
            <person name="Glasser K."/>
            <person name="Glodek A."/>
            <person name="Gong F."/>
            <person name="Gorrell J.H."/>
            <person name="Gu Z."/>
            <person name="Guan P."/>
            <person name="Harris M."/>
            <person name="Harris N.L."/>
            <person name="Harvey D.A."/>
            <person name="Heiman T.J."/>
            <person name="Hernandez J.R."/>
            <person name="Houck J."/>
            <person name="Hostin D."/>
            <person name="Houston K.A."/>
            <person name="Howland T.J."/>
            <person name="Wei M.-H."/>
            <person name="Ibegwam C."/>
            <person name="Jalali M."/>
            <person name="Kalush F."/>
            <person name="Karpen G.H."/>
            <person name="Ke Z."/>
            <person name="Kennison J.A."/>
            <person name="Ketchum K.A."/>
            <person name="Kimmel B.E."/>
            <person name="Kodira C.D."/>
            <person name="Kraft C.L."/>
            <person name="Kravitz S."/>
            <person name="Kulp D."/>
            <person name="Lai Z."/>
            <person name="Lasko P."/>
            <person name="Lei Y."/>
            <person name="Levitsky A.A."/>
            <person name="Li J.H."/>
            <person name="Li Z."/>
            <person name="Liang Y."/>
            <person name="Lin X."/>
            <person name="Liu X."/>
            <person name="Mattei B."/>
            <person name="McIntosh T.C."/>
            <person name="McLeod M.P."/>
            <person name="McPherson D."/>
            <person name="Merkulov G."/>
            <person name="Milshina N.V."/>
            <person name="Mobarry C."/>
            <person name="Morris J."/>
            <person name="Moshrefi A."/>
            <person name="Mount S.M."/>
            <person name="Moy M."/>
            <person name="Murphy B."/>
            <person name="Murphy L."/>
            <person name="Muzny D.M."/>
            <person name="Nelson D.L."/>
            <person name="Nelson D.R."/>
            <person name="Nelson K.A."/>
            <person name="Nixon K."/>
            <person name="Nusskern D.R."/>
            <person name="Pacleb J.M."/>
            <person name="Palazzolo M."/>
            <person name="Pittman G.S."/>
            <person name="Pan S."/>
            <person name="Pollard J."/>
            <person name="Puri V."/>
            <person name="Reese M.G."/>
            <person name="Reinert K."/>
            <person name="Remington K."/>
            <person name="Saunders R.D.C."/>
            <person name="Scheeler F."/>
            <person name="Shen H."/>
            <person name="Shue B.C."/>
            <person name="Siden-Kiamos I."/>
            <person name="Simpson M."/>
            <person name="Skupski M.P."/>
            <person name="Smith T.J."/>
            <person name="Spier E."/>
            <person name="Spradling A.C."/>
            <person name="Stapleton M."/>
            <person name="Strong R."/>
            <person name="Sun E."/>
            <person name="Svirskas R."/>
            <person name="Tector C."/>
            <person name="Turner R."/>
            <person name="Venter E."/>
            <person name="Wang A.H."/>
            <person name="Wang X."/>
            <person name="Wang Z.-Y."/>
            <person name="Wassarman D.A."/>
            <person name="Weinstock G.M."/>
            <person name="Weissenbach J."/>
            <person name="Williams S.M."/>
            <person name="Woodage T."/>
            <person name="Worley K.C."/>
            <person name="Wu D."/>
            <person name="Yang S."/>
            <person name="Yao Q.A."/>
            <person name="Ye J."/>
            <person name="Yeh R.-F."/>
            <person name="Zaveri J.S."/>
            <person name="Zhan M."/>
            <person name="Zhang G."/>
            <person name="Zhao Q."/>
            <person name="Zheng L."/>
            <person name="Zheng X.H."/>
            <person name="Zhong F.N."/>
            <person name="Zhong W."/>
            <person name="Zhou X."/>
            <person name="Zhu S.C."/>
            <person name="Zhu X."/>
            <person name="Smith H.O."/>
            <person name="Gibbs R.A."/>
            <person name="Myers E.W."/>
            <person name="Rubin G.M."/>
            <person name="Venter J.C."/>
        </authorList>
    </citation>
    <scope>NUCLEOTIDE SEQUENCE [LARGE SCALE GENOMIC DNA]</scope>
    <source>
        <strain>Berkeley</strain>
    </source>
</reference>
<reference key="3">
    <citation type="journal article" date="2002" name="Genome Biol.">
        <title>Annotation of the Drosophila melanogaster euchromatic genome: a systematic review.</title>
        <authorList>
            <person name="Misra S."/>
            <person name="Crosby M.A."/>
            <person name="Mungall C.J."/>
            <person name="Matthews B.B."/>
            <person name="Campbell K.S."/>
            <person name="Hradecky P."/>
            <person name="Huang Y."/>
            <person name="Kaminker J.S."/>
            <person name="Millburn G.H."/>
            <person name="Prochnik S.E."/>
            <person name="Smith C.D."/>
            <person name="Tupy J.L."/>
            <person name="Whitfield E.J."/>
            <person name="Bayraktaroglu L."/>
            <person name="Berman B.P."/>
            <person name="Bettencourt B.R."/>
            <person name="Celniker S.E."/>
            <person name="de Grey A.D.N.J."/>
            <person name="Drysdale R.A."/>
            <person name="Harris N.L."/>
            <person name="Richter J."/>
            <person name="Russo S."/>
            <person name="Schroeder A.J."/>
            <person name="Shu S.Q."/>
            <person name="Stapleton M."/>
            <person name="Yamada C."/>
            <person name="Ashburner M."/>
            <person name="Gelbart W.M."/>
            <person name="Rubin G.M."/>
            <person name="Lewis S.E."/>
        </authorList>
    </citation>
    <scope>GENOME REANNOTATION</scope>
    <source>
        <strain>Berkeley</strain>
    </source>
</reference>
<reference key="4">
    <citation type="journal article" date="2002" name="Genome Biol.">
        <title>A Drosophila full-length cDNA resource.</title>
        <authorList>
            <person name="Stapleton M."/>
            <person name="Carlson J.W."/>
            <person name="Brokstein P."/>
            <person name="Yu C."/>
            <person name="Champe M."/>
            <person name="George R.A."/>
            <person name="Guarin H."/>
            <person name="Kronmiller B."/>
            <person name="Pacleb J.M."/>
            <person name="Park S."/>
            <person name="Wan K.H."/>
            <person name="Rubin G.M."/>
            <person name="Celniker S.E."/>
        </authorList>
    </citation>
    <scope>NUCLEOTIDE SEQUENCE [LARGE SCALE MRNA]</scope>
    <source>
        <strain>Berkeley</strain>
        <tissue>Head</tissue>
    </source>
</reference>
<reference key="5">
    <citation type="journal article" date="1999" name="J. Biol. Chem.">
        <title>A novel Ggamma isolated from Drosophila constitutes a visual G protein gamma subunit of the fly compound eye.</title>
        <authorList>
            <person name="Schulz S."/>
            <person name="Huber A."/>
            <person name="Schwab K."/>
            <person name="Paulsen R."/>
        </authorList>
    </citation>
    <scope>SUBCELLULAR LOCATION</scope>
    <scope>TISSUE SPECIFICITY</scope>
</reference>
<accession>P29829</accession>
<accession>Q9VW29</accession>
<keyword id="KW-0966">Cell projection</keyword>
<keyword id="KW-0963">Cytoplasm</keyword>
<keyword id="KW-1185">Reference proteome</keyword>
<keyword id="KW-0677">Repeat</keyword>
<keyword id="KW-0716">Sensory transduction</keyword>
<keyword id="KW-0807">Transducer</keyword>
<keyword id="KW-0844">Vision</keyword>
<keyword id="KW-0853">WD repeat</keyword>